<comment type="function">
    <text evidence="1">This is one of the proteins that bind and probably mediate the attachment of the 5S RNA into the large ribosomal subunit, where it forms part of the central protuberance. In the 70S ribosome it contacts protein S13 of the 30S subunit (bridge B1b), connecting the 2 subunits; this bridge is implicated in subunit movement. May contact the P site tRNA; the 5S rRNA and some of its associated proteins might help stabilize positioning of ribosome-bound tRNAs.</text>
</comment>
<comment type="subunit">
    <text evidence="1">Part of the 50S ribosomal subunit; contacts the 5S rRNA and probably tRNA. Forms a bridge to the 30S subunit in the 70S ribosome.</text>
</comment>
<comment type="similarity">
    <text evidence="1">Belongs to the universal ribosomal protein uL5 family.</text>
</comment>
<accession>Q56231</accession>
<proteinExistence type="inferred from homology"/>
<sequence>MNPMEEVIIDKVVVNIGVGQAGDRLTKAAKVLEMLTGHKATNTLAKKSIRDFNIRKRLPIGVKVTLRKKDAMEFLQKAFYVKDYKITDYSFDKHGNAYFGISDYTDFKGMKYDPDIGIFGMDVAIVFRRRGGYRIERRRIGSKTIPNSIRVRKEEAQDFLQKNFKVTVVR</sequence>
<gene>
    <name evidence="1" type="primary">rpl5</name>
    <name type="ordered locus">Ta1258</name>
</gene>
<evidence type="ECO:0000255" key="1">
    <source>
        <dbReference type="HAMAP-Rule" id="MF_01333"/>
    </source>
</evidence>
<evidence type="ECO:0000305" key="2"/>
<feature type="chain" id="PRO_0000125071" description="Large ribosomal subunit protein uL5">
    <location>
        <begin position="1"/>
        <end position="170"/>
    </location>
</feature>
<protein>
    <recommendedName>
        <fullName evidence="1">Large ribosomal subunit protein uL5</fullName>
    </recommendedName>
    <alternativeName>
        <fullName evidence="2">50S ribosomal protein L5</fullName>
    </alternativeName>
</protein>
<name>RL5_THEAC</name>
<organism>
    <name type="scientific">Thermoplasma acidophilum (strain ATCC 25905 / DSM 1728 / JCM 9062 / NBRC 15155 / AMRC-C165)</name>
    <dbReference type="NCBI Taxonomy" id="273075"/>
    <lineage>
        <taxon>Archaea</taxon>
        <taxon>Methanobacteriati</taxon>
        <taxon>Thermoplasmatota</taxon>
        <taxon>Thermoplasmata</taxon>
        <taxon>Thermoplasmatales</taxon>
        <taxon>Thermoplasmataceae</taxon>
        <taxon>Thermoplasma</taxon>
    </lineage>
</organism>
<reference key="1">
    <citation type="submission" date="1996-06" db="EMBL/GenBank/DDBJ databases">
        <title>Nucleotide sequence of the ribosomal protein genes s4e and L5 in the archaeon Thermoplasma acidophilum.</title>
        <authorList>
            <person name="Thomas N.A."/>
            <person name="Jarrell K.F."/>
        </authorList>
    </citation>
    <scope>NUCLEOTIDE SEQUENCE [GENOMIC DNA]</scope>
</reference>
<reference key="2">
    <citation type="journal article" date="2000" name="Nature">
        <title>The genome sequence of the thermoacidophilic scavenger Thermoplasma acidophilum.</title>
        <authorList>
            <person name="Ruepp A."/>
            <person name="Graml W."/>
            <person name="Santos-Martinez M.-L."/>
            <person name="Koretke K.K."/>
            <person name="Volker C."/>
            <person name="Mewes H.-W."/>
            <person name="Frishman D."/>
            <person name="Stocker S."/>
            <person name="Lupas A.N."/>
            <person name="Baumeister W."/>
        </authorList>
    </citation>
    <scope>NUCLEOTIDE SEQUENCE [LARGE SCALE GENOMIC DNA]</scope>
    <source>
        <strain>ATCC 25905 / DSM 1728 / JCM 9062 / NBRC 15155 / AMRC-C165</strain>
    </source>
</reference>
<dbReference type="EMBL" id="U57643">
    <property type="protein sequence ID" value="AAB02245.1"/>
    <property type="molecule type" value="Genomic_DNA"/>
</dbReference>
<dbReference type="EMBL" id="AL445067">
    <property type="protein sequence ID" value="CAC12382.1"/>
    <property type="molecule type" value="Genomic_DNA"/>
</dbReference>
<dbReference type="PIR" id="T37468">
    <property type="entry name" value="T37468"/>
</dbReference>
<dbReference type="RefSeq" id="WP_010901665.1">
    <property type="nucleotide sequence ID" value="NC_002578.1"/>
</dbReference>
<dbReference type="SMR" id="Q56231"/>
<dbReference type="FunCoup" id="Q56231">
    <property type="interactions" value="157"/>
</dbReference>
<dbReference type="STRING" id="273075.gene:9572481"/>
<dbReference type="PaxDb" id="273075-Ta1258"/>
<dbReference type="EnsemblBacteria" id="CAC12382">
    <property type="protein sequence ID" value="CAC12382"/>
    <property type="gene ID" value="CAC12382"/>
</dbReference>
<dbReference type="KEGG" id="tac:Ta1258"/>
<dbReference type="eggNOG" id="arCOG04092">
    <property type="taxonomic scope" value="Archaea"/>
</dbReference>
<dbReference type="HOGENOM" id="CLU_061015_3_0_2"/>
<dbReference type="InParanoid" id="Q56231"/>
<dbReference type="OrthoDB" id="372044at2157"/>
<dbReference type="Proteomes" id="UP000001024">
    <property type="component" value="Chromosome"/>
</dbReference>
<dbReference type="GO" id="GO:1990904">
    <property type="term" value="C:ribonucleoprotein complex"/>
    <property type="evidence" value="ECO:0007669"/>
    <property type="project" value="UniProtKB-KW"/>
</dbReference>
<dbReference type="GO" id="GO:0005840">
    <property type="term" value="C:ribosome"/>
    <property type="evidence" value="ECO:0007669"/>
    <property type="project" value="UniProtKB-KW"/>
</dbReference>
<dbReference type="GO" id="GO:0019843">
    <property type="term" value="F:rRNA binding"/>
    <property type="evidence" value="ECO:0007669"/>
    <property type="project" value="UniProtKB-UniRule"/>
</dbReference>
<dbReference type="GO" id="GO:0003735">
    <property type="term" value="F:structural constituent of ribosome"/>
    <property type="evidence" value="ECO:0007669"/>
    <property type="project" value="InterPro"/>
</dbReference>
<dbReference type="GO" id="GO:0000049">
    <property type="term" value="F:tRNA binding"/>
    <property type="evidence" value="ECO:0007669"/>
    <property type="project" value="UniProtKB-UniRule"/>
</dbReference>
<dbReference type="GO" id="GO:0006412">
    <property type="term" value="P:translation"/>
    <property type="evidence" value="ECO:0007669"/>
    <property type="project" value="UniProtKB-UniRule"/>
</dbReference>
<dbReference type="FunFam" id="3.30.1440.10:FF:000002">
    <property type="entry name" value="60S ribosomal protein L11"/>
    <property type="match status" value="1"/>
</dbReference>
<dbReference type="Gene3D" id="3.30.1440.10">
    <property type="match status" value="1"/>
</dbReference>
<dbReference type="HAMAP" id="MF_01333_A">
    <property type="entry name" value="Ribosomal_uL5_A"/>
    <property type="match status" value="1"/>
</dbReference>
<dbReference type="InterPro" id="IPR002132">
    <property type="entry name" value="Ribosomal_uL5"/>
</dbReference>
<dbReference type="InterPro" id="IPR022804">
    <property type="entry name" value="Ribosomal_uL5_arc"/>
</dbReference>
<dbReference type="InterPro" id="IPR031309">
    <property type="entry name" value="Ribosomal_uL5_C"/>
</dbReference>
<dbReference type="InterPro" id="IPR022803">
    <property type="entry name" value="Ribosomal_uL5_dom_sf"/>
</dbReference>
<dbReference type="InterPro" id="IPR031310">
    <property type="entry name" value="Ribosomal_uL5_N"/>
</dbReference>
<dbReference type="NCBIfam" id="NF003258">
    <property type="entry name" value="PRK04219.1"/>
    <property type="match status" value="1"/>
</dbReference>
<dbReference type="PANTHER" id="PTHR11994">
    <property type="entry name" value="60S RIBOSOMAL PROTEIN L11-RELATED"/>
    <property type="match status" value="1"/>
</dbReference>
<dbReference type="Pfam" id="PF00281">
    <property type="entry name" value="Ribosomal_L5"/>
    <property type="match status" value="1"/>
</dbReference>
<dbReference type="Pfam" id="PF00673">
    <property type="entry name" value="Ribosomal_L5_C"/>
    <property type="match status" value="1"/>
</dbReference>
<dbReference type="PIRSF" id="PIRSF002161">
    <property type="entry name" value="Ribosomal_L5"/>
    <property type="match status" value="1"/>
</dbReference>
<dbReference type="SUPFAM" id="SSF55282">
    <property type="entry name" value="RL5-like"/>
    <property type="match status" value="1"/>
</dbReference>
<keyword id="KW-1185">Reference proteome</keyword>
<keyword id="KW-0687">Ribonucleoprotein</keyword>
<keyword id="KW-0689">Ribosomal protein</keyword>
<keyword id="KW-0694">RNA-binding</keyword>
<keyword id="KW-0699">rRNA-binding</keyword>
<keyword id="KW-0820">tRNA-binding</keyword>